<evidence type="ECO:0000255" key="1">
    <source>
        <dbReference type="HAMAP-Rule" id="MF_00532"/>
    </source>
</evidence>
<evidence type="ECO:0000305" key="2"/>
<gene>
    <name evidence="1" type="primary">rpsI</name>
    <name type="ordered locus">BRE_341</name>
</gene>
<comment type="similarity">
    <text evidence="1">Belongs to the universal ribosomal protein uS9 family.</text>
</comment>
<dbReference type="EMBL" id="CP000993">
    <property type="protein sequence ID" value="ACH94586.1"/>
    <property type="molecule type" value="Genomic_DNA"/>
</dbReference>
<dbReference type="RefSeq" id="WP_012538829.1">
    <property type="nucleotide sequence ID" value="NC_011244.1"/>
</dbReference>
<dbReference type="SMR" id="B5RRF2"/>
<dbReference type="KEGG" id="bre:BRE_341"/>
<dbReference type="HOGENOM" id="CLU_046483_2_1_12"/>
<dbReference type="Proteomes" id="UP000000612">
    <property type="component" value="Chromosome"/>
</dbReference>
<dbReference type="GO" id="GO:0022627">
    <property type="term" value="C:cytosolic small ribosomal subunit"/>
    <property type="evidence" value="ECO:0007669"/>
    <property type="project" value="TreeGrafter"/>
</dbReference>
<dbReference type="GO" id="GO:0003723">
    <property type="term" value="F:RNA binding"/>
    <property type="evidence" value="ECO:0007669"/>
    <property type="project" value="TreeGrafter"/>
</dbReference>
<dbReference type="GO" id="GO:0003735">
    <property type="term" value="F:structural constituent of ribosome"/>
    <property type="evidence" value="ECO:0007669"/>
    <property type="project" value="InterPro"/>
</dbReference>
<dbReference type="GO" id="GO:0006412">
    <property type="term" value="P:translation"/>
    <property type="evidence" value="ECO:0007669"/>
    <property type="project" value="UniProtKB-UniRule"/>
</dbReference>
<dbReference type="FunFam" id="3.30.230.10:FF:000001">
    <property type="entry name" value="30S ribosomal protein S9"/>
    <property type="match status" value="1"/>
</dbReference>
<dbReference type="Gene3D" id="3.30.230.10">
    <property type="match status" value="1"/>
</dbReference>
<dbReference type="HAMAP" id="MF_00532_B">
    <property type="entry name" value="Ribosomal_uS9_B"/>
    <property type="match status" value="1"/>
</dbReference>
<dbReference type="InterPro" id="IPR020568">
    <property type="entry name" value="Ribosomal_Su5_D2-typ_SF"/>
</dbReference>
<dbReference type="InterPro" id="IPR000754">
    <property type="entry name" value="Ribosomal_uS9"/>
</dbReference>
<dbReference type="InterPro" id="IPR023035">
    <property type="entry name" value="Ribosomal_uS9_bac/plastid"/>
</dbReference>
<dbReference type="InterPro" id="IPR020574">
    <property type="entry name" value="Ribosomal_uS9_CS"/>
</dbReference>
<dbReference type="InterPro" id="IPR014721">
    <property type="entry name" value="Ribsml_uS5_D2-typ_fold_subgr"/>
</dbReference>
<dbReference type="NCBIfam" id="NF001099">
    <property type="entry name" value="PRK00132.1"/>
    <property type="match status" value="1"/>
</dbReference>
<dbReference type="PANTHER" id="PTHR21569">
    <property type="entry name" value="RIBOSOMAL PROTEIN S9"/>
    <property type="match status" value="1"/>
</dbReference>
<dbReference type="PANTHER" id="PTHR21569:SF1">
    <property type="entry name" value="SMALL RIBOSOMAL SUBUNIT PROTEIN US9M"/>
    <property type="match status" value="1"/>
</dbReference>
<dbReference type="Pfam" id="PF00380">
    <property type="entry name" value="Ribosomal_S9"/>
    <property type="match status" value="1"/>
</dbReference>
<dbReference type="SUPFAM" id="SSF54211">
    <property type="entry name" value="Ribosomal protein S5 domain 2-like"/>
    <property type="match status" value="1"/>
</dbReference>
<dbReference type="PROSITE" id="PS00360">
    <property type="entry name" value="RIBOSOMAL_S9"/>
    <property type="match status" value="1"/>
</dbReference>
<protein>
    <recommendedName>
        <fullName evidence="1">Small ribosomal subunit protein uS9</fullName>
    </recommendedName>
    <alternativeName>
        <fullName evidence="2">30S ribosomal protein S9</fullName>
    </alternativeName>
</protein>
<organism>
    <name type="scientific">Borrelia recurrentis (strain A1)</name>
    <dbReference type="NCBI Taxonomy" id="412418"/>
    <lineage>
        <taxon>Bacteria</taxon>
        <taxon>Pseudomonadati</taxon>
        <taxon>Spirochaetota</taxon>
        <taxon>Spirochaetia</taxon>
        <taxon>Spirochaetales</taxon>
        <taxon>Borreliaceae</taxon>
        <taxon>Borrelia</taxon>
    </lineage>
</organism>
<name>RS9_BORRA</name>
<keyword id="KW-0687">Ribonucleoprotein</keyword>
<keyword id="KW-0689">Ribosomal protein</keyword>
<feature type="chain" id="PRO_1000128089" description="Small ribosomal subunit protein uS9">
    <location>
        <begin position="1"/>
        <end position="136"/>
    </location>
</feature>
<proteinExistence type="inferred from homology"/>
<accession>B5RRF2</accession>
<sequence>MAKSDVKGVNLGMGTGRRKSSVARVYIREGKGDIKINHKNFDVYMQLEKLKTIALSPLALTHTLGKYDIYINVYGGGISGQAGAIRHGIARALFDLDEEYKMVLKSNEFLTRDSRKVERKKFGKKKARKSFQFSKR</sequence>
<reference key="1">
    <citation type="journal article" date="2008" name="PLoS Genet.">
        <title>The genome of Borrelia recurrentis, the agent of deadly louse-borne relapsing fever, is a degraded subset of tick-borne Borrelia duttonii.</title>
        <authorList>
            <person name="Lescot M."/>
            <person name="Audic S."/>
            <person name="Robert C."/>
            <person name="Nguyen T.T."/>
            <person name="Blanc G."/>
            <person name="Cutler S.J."/>
            <person name="Wincker P."/>
            <person name="Couloux A."/>
            <person name="Claverie J.-M."/>
            <person name="Raoult D."/>
            <person name="Drancourt M."/>
        </authorList>
    </citation>
    <scope>NUCLEOTIDE SEQUENCE [LARGE SCALE GENOMIC DNA]</scope>
    <source>
        <strain>A1</strain>
    </source>
</reference>